<keyword id="KW-0002">3D-structure</keyword>
<keyword id="KW-0324">Glycolysis</keyword>
<keyword id="KW-0456">Lyase</keyword>
<keyword id="KW-0479">Metal-binding</keyword>
<keyword id="KW-1185">Reference proteome</keyword>
<keyword id="KW-0862">Zinc</keyword>
<accession>P56109</accession>
<reference key="1">
    <citation type="journal article" date="1997" name="Nature">
        <title>The complete genome sequence of the gastric pathogen Helicobacter pylori.</title>
        <authorList>
            <person name="Tomb J.-F."/>
            <person name="White O."/>
            <person name="Kerlavage A.R."/>
            <person name="Clayton R.A."/>
            <person name="Sutton G.G."/>
            <person name="Fleischmann R.D."/>
            <person name="Ketchum K.A."/>
            <person name="Klenk H.-P."/>
            <person name="Gill S.R."/>
            <person name="Dougherty B.A."/>
            <person name="Nelson K.E."/>
            <person name="Quackenbush J."/>
            <person name="Zhou L."/>
            <person name="Kirkness E.F."/>
            <person name="Peterson S.N."/>
            <person name="Loftus B.J."/>
            <person name="Richardson D.L."/>
            <person name="Dodson R.J."/>
            <person name="Khalak H.G."/>
            <person name="Glodek A."/>
            <person name="McKenney K."/>
            <person name="FitzGerald L.M."/>
            <person name="Lee N."/>
            <person name="Adams M.D."/>
            <person name="Hickey E.K."/>
            <person name="Berg D.E."/>
            <person name="Gocayne J.D."/>
            <person name="Utterback T.R."/>
            <person name="Peterson J.D."/>
            <person name="Kelley J.M."/>
            <person name="Cotton M.D."/>
            <person name="Weidman J.F."/>
            <person name="Fujii C."/>
            <person name="Bowman C."/>
            <person name="Watthey L."/>
            <person name="Wallin E."/>
            <person name="Hayes W.S."/>
            <person name="Borodovsky M."/>
            <person name="Karp P.D."/>
            <person name="Smith H.O."/>
            <person name="Fraser C.M."/>
            <person name="Venter J.C."/>
        </authorList>
    </citation>
    <scope>NUCLEOTIDE SEQUENCE [LARGE SCALE GENOMIC DNA]</scope>
    <source>
        <strain>ATCC 700392 / 26695</strain>
    </source>
</reference>
<dbReference type="EC" id="4.1.2.13"/>
<dbReference type="EMBL" id="AE000511">
    <property type="protein sequence ID" value="AAD07246.1"/>
    <property type="molecule type" value="Genomic_DNA"/>
</dbReference>
<dbReference type="PIR" id="H64541">
    <property type="entry name" value="H64541"/>
</dbReference>
<dbReference type="RefSeq" id="NP_206975.1">
    <property type="nucleotide sequence ID" value="NC_000915.1"/>
</dbReference>
<dbReference type="RefSeq" id="WP_000960471.1">
    <property type="nucleotide sequence ID" value="NC_018939.1"/>
</dbReference>
<dbReference type="PDB" id="3C4U">
    <property type="method" value="X-ray"/>
    <property type="resolution" value="1.83 A"/>
    <property type="chains" value="A/B=1-307"/>
</dbReference>
<dbReference type="PDB" id="3C52">
    <property type="method" value="X-ray"/>
    <property type="resolution" value="2.30 A"/>
    <property type="chains" value="A/B=1-307"/>
</dbReference>
<dbReference type="PDB" id="3C56">
    <property type="method" value="X-ray"/>
    <property type="resolution" value="2.30 A"/>
    <property type="chains" value="A/B=1-307"/>
</dbReference>
<dbReference type="PDB" id="5UCK">
    <property type="method" value="X-ray"/>
    <property type="resolution" value="1.78 A"/>
    <property type="chains" value="A/B=1-307"/>
</dbReference>
<dbReference type="PDB" id="5UCN">
    <property type="method" value="X-ray"/>
    <property type="resolution" value="1.67 A"/>
    <property type="chains" value="A/B=1-307"/>
</dbReference>
<dbReference type="PDB" id="5UCP">
    <property type="method" value="X-ray"/>
    <property type="resolution" value="1.44 A"/>
    <property type="chains" value="A/B=1-307"/>
</dbReference>
<dbReference type="PDB" id="5UCS">
    <property type="method" value="X-ray"/>
    <property type="resolution" value="1.41 A"/>
    <property type="chains" value="A/B=1-307"/>
</dbReference>
<dbReference type="PDB" id="5UCZ">
    <property type="method" value="X-ray"/>
    <property type="resolution" value="1.78 A"/>
    <property type="chains" value="A/B=1-307"/>
</dbReference>
<dbReference type="PDB" id="5UD0">
    <property type="method" value="X-ray"/>
    <property type="resolution" value="1.65 A"/>
    <property type="chains" value="A/B=1-307"/>
</dbReference>
<dbReference type="PDB" id="5UD1">
    <property type="method" value="X-ray"/>
    <property type="resolution" value="1.79 A"/>
    <property type="chains" value="A/B=1-307"/>
</dbReference>
<dbReference type="PDB" id="5UD2">
    <property type="method" value="X-ray"/>
    <property type="resolution" value="1.77 A"/>
    <property type="chains" value="A/B=1-307"/>
</dbReference>
<dbReference type="PDB" id="5UD3">
    <property type="method" value="X-ray"/>
    <property type="resolution" value="1.44 A"/>
    <property type="chains" value="A/B=1-307"/>
</dbReference>
<dbReference type="PDB" id="5UD4">
    <property type="method" value="X-ray"/>
    <property type="resolution" value="1.50 A"/>
    <property type="chains" value="A/B=1-307"/>
</dbReference>
<dbReference type="PDB" id="5VJF">
    <property type="method" value="X-ray"/>
    <property type="resolution" value="1.85 A"/>
    <property type="chains" value="A/B=1-307"/>
</dbReference>
<dbReference type="PDBsum" id="3C4U"/>
<dbReference type="PDBsum" id="3C52"/>
<dbReference type="PDBsum" id="3C56"/>
<dbReference type="PDBsum" id="5UCK"/>
<dbReference type="PDBsum" id="5UCN"/>
<dbReference type="PDBsum" id="5UCP"/>
<dbReference type="PDBsum" id="5UCS"/>
<dbReference type="PDBsum" id="5UCZ"/>
<dbReference type="PDBsum" id="5UD0"/>
<dbReference type="PDBsum" id="5UD1"/>
<dbReference type="PDBsum" id="5UD2"/>
<dbReference type="PDBsum" id="5UD3"/>
<dbReference type="PDBsum" id="5UD4"/>
<dbReference type="PDBsum" id="5VJF"/>
<dbReference type="SMR" id="P56109"/>
<dbReference type="FunCoup" id="P56109">
    <property type="interactions" value="230"/>
</dbReference>
<dbReference type="STRING" id="85962.HP_0176"/>
<dbReference type="BindingDB" id="P56109"/>
<dbReference type="ChEMBL" id="CHEMBL1287618"/>
<dbReference type="PaxDb" id="85962-C694_00875"/>
<dbReference type="EnsemblBacteria" id="AAD07246">
    <property type="protein sequence ID" value="AAD07246"/>
    <property type="gene ID" value="HP_0176"/>
</dbReference>
<dbReference type="KEGG" id="heo:C694_00875"/>
<dbReference type="KEGG" id="hpy:HP_0176"/>
<dbReference type="PATRIC" id="fig|85962.47.peg.190"/>
<dbReference type="eggNOG" id="COG0191">
    <property type="taxonomic scope" value="Bacteria"/>
</dbReference>
<dbReference type="InParanoid" id="P56109"/>
<dbReference type="OrthoDB" id="9803995at2"/>
<dbReference type="PhylomeDB" id="P56109"/>
<dbReference type="BRENDA" id="4.1.2.13">
    <property type="organism ID" value="2604"/>
</dbReference>
<dbReference type="UniPathway" id="UPA00109">
    <property type="reaction ID" value="UER00183"/>
</dbReference>
<dbReference type="EvolutionaryTrace" id="P56109"/>
<dbReference type="PRO" id="PR:P56109"/>
<dbReference type="Proteomes" id="UP000000429">
    <property type="component" value="Chromosome"/>
</dbReference>
<dbReference type="GO" id="GO:0004332">
    <property type="term" value="F:fructose-bisphosphate aldolase activity"/>
    <property type="evidence" value="ECO:0007669"/>
    <property type="project" value="UniProtKB-EC"/>
</dbReference>
<dbReference type="GO" id="GO:0008270">
    <property type="term" value="F:zinc ion binding"/>
    <property type="evidence" value="ECO:0007669"/>
    <property type="project" value="InterPro"/>
</dbReference>
<dbReference type="GO" id="GO:0030388">
    <property type="term" value="P:fructose 1,6-bisphosphate metabolic process"/>
    <property type="evidence" value="ECO:0007669"/>
    <property type="project" value="InterPro"/>
</dbReference>
<dbReference type="GO" id="GO:0006096">
    <property type="term" value="P:glycolytic process"/>
    <property type="evidence" value="ECO:0007669"/>
    <property type="project" value="UniProtKB-UniPathway"/>
</dbReference>
<dbReference type="CDD" id="cd00947">
    <property type="entry name" value="TBP_aldolase_IIB"/>
    <property type="match status" value="1"/>
</dbReference>
<dbReference type="Gene3D" id="3.20.20.70">
    <property type="entry name" value="Aldolase class I"/>
    <property type="match status" value="1"/>
</dbReference>
<dbReference type="InterPro" id="IPR013785">
    <property type="entry name" value="Aldolase_TIM"/>
</dbReference>
<dbReference type="InterPro" id="IPR050246">
    <property type="entry name" value="Class_II_FBP_aldolase"/>
</dbReference>
<dbReference type="InterPro" id="IPR000771">
    <property type="entry name" value="FBA_II"/>
</dbReference>
<dbReference type="InterPro" id="IPR011289">
    <property type="entry name" value="Fruc_bis_ald_class-2"/>
</dbReference>
<dbReference type="NCBIfam" id="TIGR00167">
    <property type="entry name" value="cbbA"/>
    <property type="match status" value="1"/>
</dbReference>
<dbReference type="NCBIfam" id="TIGR01859">
    <property type="entry name" value="fruc_bis_ald"/>
    <property type="match status" value="1"/>
</dbReference>
<dbReference type="NCBIfam" id="NF004493">
    <property type="entry name" value="PRK05835.1"/>
    <property type="match status" value="1"/>
</dbReference>
<dbReference type="PANTHER" id="PTHR30304">
    <property type="entry name" value="D-TAGATOSE-1,6-BISPHOSPHATE ALDOLASE"/>
    <property type="match status" value="1"/>
</dbReference>
<dbReference type="PANTHER" id="PTHR30304:SF0">
    <property type="entry name" value="D-TAGATOSE-1,6-BISPHOSPHATE ALDOLASE SUBUNIT GATY-RELATED"/>
    <property type="match status" value="1"/>
</dbReference>
<dbReference type="Pfam" id="PF01116">
    <property type="entry name" value="F_bP_aldolase"/>
    <property type="match status" value="1"/>
</dbReference>
<dbReference type="PIRSF" id="PIRSF001359">
    <property type="entry name" value="F_bP_aldolase_II"/>
    <property type="match status" value="1"/>
</dbReference>
<dbReference type="SUPFAM" id="SSF51569">
    <property type="entry name" value="Aldolase"/>
    <property type="match status" value="1"/>
</dbReference>
<dbReference type="PROSITE" id="PS00602">
    <property type="entry name" value="ALDOLASE_CLASS_II_1"/>
    <property type="match status" value="1"/>
</dbReference>
<dbReference type="PROSITE" id="PS00806">
    <property type="entry name" value="ALDOLASE_CLASS_II_2"/>
    <property type="match status" value="1"/>
</dbReference>
<feature type="chain" id="PRO_0000178717" description="Fructose-bisphosphate aldolase">
    <location>
        <begin position="1"/>
        <end position="307"/>
    </location>
</feature>
<feature type="active site" description="Proton donor" evidence="1">
    <location>
        <position position="82"/>
    </location>
</feature>
<feature type="binding site" evidence="1">
    <location>
        <position position="49"/>
    </location>
    <ligand>
        <name>D-glyceraldehyde 3-phosphate</name>
        <dbReference type="ChEBI" id="CHEBI:59776"/>
    </ligand>
</feature>
<feature type="binding site" evidence="1">
    <location>
        <position position="83"/>
    </location>
    <ligand>
        <name>Zn(2+)</name>
        <dbReference type="ChEBI" id="CHEBI:29105"/>
        <label>1</label>
        <note>catalytic</note>
    </ligand>
</feature>
<feature type="binding site" evidence="1">
    <location>
        <position position="104"/>
    </location>
    <ligand>
        <name>Zn(2+)</name>
        <dbReference type="ChEBI" id="CHEBI:29105"/>
        <label>2</label>
    </ligand>
</feature>
<feature type="binding site" evidence="1">
    <location>
        <position position="134"/>
    </location>
    <ligand>
        <name>Zn(2+)</name>
        <dbReference type="ChEBI" id="CHEBI:29105"/>
        <label>2</label>
    </ligand>
</feature>
<feature type="binding site" evidence="1">
    <location>
        <position position="180"/>
    </location>
    <ligand>
        <name>Zn(2+)</name>
        <dbReference type="ChEBI" id="CHEBI:29105"/>
        <label>1</label>
        <note>catalytic</note>
    </ligand>
</feature>
<feature type="binding site" evidence="1">
    <location>
        <position position="181"/>
    </location>
    <ligand>
        <name>dihydroxyacetone phosphate</name>
        <dbReference type="ChEBI" id="CHEBI:57642"/>
    </ligand>
</feature>
<feature type="binding site" evidence="1">
    <location>
        <position position="210"/>
    </location>
    <ligand>
        <name>Zn(2+)</name>
        <dbReference type="ChEBI" id="CHEBI:29105"/>
        <label>1</label>
        <note>catalytic</note>
    </ligand>
</feature>
<feature type="binding site" evidence="1">
    <location>
        <begin position="211"/>
        <end position="213"/>
    </location>
    <ligand>
        <name>dihydroxyacetone phosphate</name>
        <dbReference type="ChEBI" id="CHEBI:57642"/>
    </ligand>
</feature>
<feature type="binding site" evidence="1">
    <location>
        <begin position="253"/>
        <end position="256"/>
    </location>
    <ligand>
        <name>dihydroxyacetone phosphate</name>
        <dbReference type="ChEBI" id="CHEBI:57642"/>
    </ligand>
</feature>
<feature type="helix" evidence="3">
    <location>
        <begin position="5"/>
        <end position="15"/>
    </location>
</feature>
<feature type="strand" evidence="3">
    <location>
        <begin position="19"/>
        <end position="23"/>
    </location>
</feature>
<feature type="helix" evidence="3">
    <location>
        <begin position="27"/>
        <end position="40"/>
    </location>
</feature>
<feature type="strand" evidence="3">
    <location>
        <begin position="44"/>
        <end position="49"/>
    </location>
</feature>
<feature type="helix" evidence="3">
    <location>
        <begin position="50"/>
        <end position="56"/>
    </location>
</feature>
<feature type="helix" evidence="3">
    <location>
        <begin position="58"/>
        <end position="71"/>
    </location>
</feature>
<feature type="strand" evidence="3">
    <location>
        <begin position="77"/>
        <end position="84"/>
    </location>
</feature>
<feature type="helix" evidence="3">
    <location>
        <begin position="87"/>
        <end position="96"/>
    </location>
</feature>
<feature type="strand" evidence="3">
    <location>
        <begin position="99"/>
        <end position="103"/>
    </location>
</feature>
<feature type="helix" evidence="3">
    <location>
        <begin position="110"/>
        <end position="126"/>
    </location>
</feature>
<feature type="strand" evidence="3">
    <location>
        <begin position="130"/>
        <end position="135"/>
    </location>
</feature>
<feature type="helix" evidence="3">
    <location>
        <begin position="157"/>
        <end position="167"/>
    </location>
</feature>
<feature type="strand" evidence="3">
    <location>
        <begin position="170"/>
        <end position="174"/>
    </location>
</feature>
<feature type="helix" evidence="3">
    <location>
        <begin position="181"/>
        <end position="183"/>
    </location>
</feature>
<feature type="strand" evidence="4">
    <location>
        <begin position="186"/>
        <end position="188"/>
    </location>
</feature>
<feature type="helix" evidence="3">
    <location>
        <begin position="193"/>
        <end position="203"/>
    </location>
</feature>
<feature type="strand" evidence="3">
    <location>
        <begin position="207"/>
        <end position="209"/>
    </location>
</feature>
<feature type="helix" evidence="3">
    <location>
        <begin position="217"/>
        <end position="225"/>
    </location>
</feature>
<feature type="helix" evidence="3">
    <location>
        <begin position="238"/>
        <end position="247"/>
    </location>
</feature>
<feature type="strand" evidence="3">
    <location>
        <begin position="249"/>
        <end position="254"/>
    </location>
</feature>
<feature type="helix" evidence="3">
    <location>
        <begin position="256"/>
        <end position="272"/>
    </location>
</feature>
<feature type="helix" evidence="3">
    <location>
        <begin position="279"/>
        <end position="301"/>
    </location>
</feature>
<name>ALF_HELPY</name>
<protein>
    <recommendedName>
        <fullName>Fructose-bisphosphate aldolase</fullName>
        <shortName>FBP aldolase</shortName>
        <shortName>FBPA</shortName>
        <ecNumber>4.1.2.13</ecNumber>
    </recommendedName>
    <alternativeName>
        <fullName>Fructose-1,6-bisphosphate aldolase</fullName>
    </alternativeName>
</protein>
<organism>
    <name type="scientific">Helicobacter pylori (strain ATCC 700392 / 26695)</name>
    <name type="common">Campylobacter pylori</name>
    <dbReference type="NCBI Taxonomy" id="85962"/>
    <lineage>
        <taxon>Bacteria</taxon>
        <taxon>Pseudomonadati</taxon>
        <taxon>Campylobacterota</taxon>
        <taxon>Epsilonproteobacteria</taxon>
        <taxon>Campylobacterales</taxon>
        <taxon>Helicobacteraceae</taxon>
        <taxon>Helicobacter</taxon>
    </lineage>
</organism>
<sequence length="307" mass="33773">MLVKGNEILLKAHKEGYGVGAFNFVNFEMLNAIFEAGNEENSPLFIQTSEGAIKYMGIDMAVGMVKTMCERYPHIPVALHLDHGTTFESCEKAVKAGFTSVMIDASHHAFEENLELTSKVVKMAHNAGVSVEAELGRLMGIEDNISVDEKDAVLVNPKEAEQFVKESQVDYLAPAIGTSHGAFKFKGEPKLDFERLQEVKRLTNIPLVLHGASAIPDNVRKSYLDAGGDLKGSKGVPFEFLQESVKGGINKVNTDTDLRIAFIAEVRKVANEDKSQFDLRKFFSPAQLALKNVVKERMKLLGSANKI</sequence>
<gene>
    <name type="primary">fba</name>
    <name type="ordered locus">HP_0176</name>
</gene>
<evidence type="ECO:0000250" key="1"/>
<evidence type="ECO:0000305" key="2"/>
<evidence type="ECO:0007829" key="3">
    <source>
        <dbReference type="PDB" id="5UCS"/>
    </source>
</evidence>
<evidence type="ECO:0007829" key="4">
    <source>
        <dbReference type="PDB" id="5UD3"/>
    </source>
</evidence>
<comment type="function">
    <text evidence="1">Catalyzes the aldol condensation of dihydroxyacetone phosphate (DHAP or glycerone-phosphate) with glyceraldehyde 3-phosphate (G3P) to form fructose 1,6-bisphosphate (FBP) in gluconeogenesis and the reverse reaction in glycolysis.</text>
</comment>
<comment type="catalytic activity">
    <reaction>
        <text>beta-D-fructose 1,6-bisphosphate = D-glyceraldehyde 3-phosphate + dihydroxyacetone phosphate</text>
        <dbReference type="Rhea" id="RHEA:14729"/>
        <dbReference type="ChEBI" id="CHEBI:32966"/>
        <dbReference type="ChEBI" id="CHEBI:57642"/>
        <dbReference type="ChEBI" id="CHEBI:59776"/>
        <dbReference type="EC" id="4.1.2.13"/>
    </reaction>
</comment>
<comment type="cofactor">
    <cofactor evidence="1">
        <name>Zn(2+)</name>
        <dbReference type="ChEBI" id="CHEBI:29105"/>
    </cofactor>
    <text evidence="1">Binds 2 Zn(2+) ions per subunit. One is catalytic and the other provides a structural contribution.</text>
</comment>
<comment type="pathway">
    <text>Carbohydrate degradation; glycolysis; D-glyceraldehyde 3-phosphate and glycerone phosphate from D-glucose: step 4/4.</text>
</comment>
<comment type="subunit">
    <text evidence="1">Homodimer.</text>
</comment>
<comment type="similarity">
    <text evidence="2">Belongs to the class II fructose-bisphosphate aldolase family.</text>
</comment>
<proteinExistence type="evidence at protein level"/>